<feature type="chain" id="PRO_0000234260" description="Urease subunit beta">
    <location>
        <begin position="1"/>
        <end position="101"/>
    </location>
</feature>
<dbReference type="EC" id="3.5.1.5" evidence="1"/>
<dbReference type="EMBL" id="AE004091">
    <property type="protein sequence ID" value="AAG08252.1"/>
    <property type="molecule type" value="Genomic_DNA"/>
</dbReference>
<dbReference type="PIR" id="G83037">
    <property type="entry name" value="G83037"/>
</dbReference>
<dbReference type="RefSeq" id="NP_253554.1">
    <property type="nucleotide sequence ID" value="NC_002516.2"/>
</dbReference>
<dbReference type="RefSeq" id="WP_003095450.1">
    <property type="nucleotide sequence ID" value="NZ_QZGE01000002.1"/>
</dbReference>
<dbReference type="SMR" id="Q9HUU6"/>
<dbReference type="STRING" id="208964.PA4867"/>
<dbReference type="PaxDb" id="208964-PA4867"/>
<dbReference type="GeneID" id="882185"/>
<dbReference type="KEGG" id="pae:PA4867"/>
<dbReference type="PATRIC" id="fig|208964.12.peg.5100"/>
<dbReference type="PseudoCAP" id="PA4867"/>
<dbReference type="HOGENOM" id="CLU_129707_1_1_6"/>
<dbReference type="InParanoid" id="Q9HUU6"/>
<dbReference type="OrthoDB" id="9797217at2"/>
<dbReference type="PhylomeDB" id="Q9HUU6"/>
<dbReference type="BioCyc" id="PAER208964:G1FZ6-4981-MONOMER"/>
<dbReference type="UniPathway" id="UPA00258">
    <property type="reaction ID" value="UER00370"/>
</dbReference>
<dbReference type="Proteomes" id="UP000002438">
    <property type="component" value="Chromosome"/>
</dbReference>
<dbReference type="GO" id="GO:0035550">
    <property type="term" value="C:urease complex"/>
    <property type="evidence" value="ECO:0007669"/>
    <property type="project" value="InterPro"/>
</dbReference>
<dbReference type="GO" id="GO:0009039">
    <property type="term" value="F:urease activity"/>
    <property type="evidence" value="ECO:0000318"/>
    <property type="project" value="GO_Central"/>
</dbReference>
<dbReference type="GO" id="GO:0043419">
    <property type="term" value="P:urea catabolic process"/>
    <property type="evidence" value="ECO:0000318"/>
    <property type="project" value="GO_Central"/>
</dbReference>
<dbReference type="CDD" id="cd00407">
    <property type="entry name" value="Urease_beta"/>
    <property type="match status" value="1"/>
</dbReference>
<dbReference type="FunFam" id="2.10.150.10:FF:000001">
    <property type="entry name" value="Urease subunit beta"/>
    <property type="match status" value="1"/>
</dbReference>
<dbReference type="Gene3D" id="2.10.150.10">
    <property type="entry name" value="Urease, beta subunit"/>
    <property type="match status" value="1"/>
</dbReference>
<dbReference type="HAMAP" id="MF_01954">
    <property type="entry name" value="Urease_beta"/>
    <property type="match status" value="1"/>
</dbReference>
<dbReference type="InterPro" id="IPR002019">
    <property type="entry name" value="Urease_beta-like"/>
</dbReference>
<dbReference type="InterPro" id="IPR036461">
    <property type="entry name" value="Urease_betasu_sf"/>
</dbReference>
<dbReference type="InterPro" id="IPR050069">
    <property type="entry name" value="Urease_subunit"/>
</dbReference>
<dbReference type="NCBIfam" id="NF009682">
    <property type="entry name" value="PRK13203.1"/>
    <property type="match status" value="1"/>
</dbReference>
<dbReference type="NCBIfam" id="TIGR00192">
    <property type="entry name" value="urease_beta"/>
    <property type="match status" value="1"/>
</dbReference>
<dbReference type="PANTHER" id="PTHR33569">
    <property type="entry name" value="UREASE"/>
    <property type="match status" value="1"/>
</dbReference>
<dbReference type="PANTHER" id="PTHR33569:SF1">
    <property type="entry name" value="UREASE"/>
    <property type="match status" value="1"/>
</dbReference>
<dbReference type="Pfam" id="PF00699">
    <property type="entry name" value="Urease_beta"/>
    <property type="match status" value="1"/>
</dbReference>
<dbReference type="SUPFAM" id="SSF51278">
    <property type="entry name" value="Urease, beta-subunit"/>
    <property type="match status" value="1"/>
</dbReference>
<name>URE2_PSEAE</name>
<gene>
    <name evidence="1" type="primary">ureB</name>
    <name type="ordered locus">PA4867</name>
</gene>
<reference key="1">
    <citation type="journal article" date="2000" name="Nature">
        <title>Complete genome sequence of Pseudomonas aeruginosa PAO1, an opportunistic pathogen.</title>
        <authorList>
            <person name="Stover C.K."/>
            <person name="Pham X.-Q.T."/>
            <person name="Erwin A.L."/>
            <person name="Mizoguchi S.D."/>
            <person name="Warrener P."/>
            <person name="Hickey M.J."/>
            <person name="Brinkman F.S.L."/>
            <person name="Hufnagle W.O."/>
            <person name="Kowalik D.J."/>
            <person name="Lagrou M."/>
            <person name="Garber R.L."/>
            <person name="Goltry L."/>
            <person name="Tolentino E."/>
            <person name="Westbrock-Wadman S."/>
            <person name="Yuan Y."/>
            <person name="Brody L.L."/>
            <person name="Coulter S.N."/>
            <person name="Folger K.R."/>
            <person name="Kas A."/>
            <person name="Larbig K."/>
            <person name="Lim R.M."/>
            <person name="Smith K.A."/>
            <person name="Spencer D.H."/>
            <person name="Wong G.K.-S."/>
            <person name="Wu Z."/>
            <person name="Paulsen I.T."/>
            <person name="Reizer J."/>
            <person name="Saier M.H. Jr."/>
            <person name="Hancock R.E.W."/>
            <person name="Lory S."/>
            <person name="Olson M.V."/>
        </authorList>
    </citation>
    <scope>NUCLEOTIDE SEQUENCE [LARGE SCALE GENOMIC DNA]</scope>
    <source>
        <strain>ATCC 15692 / DSM 22644 / CIP 104116 / JCM 14847 / LMG 12228 / 1C / PRS 101 / PAO1</strain>
    </source>
</reference>
<comment type="catalytic activity">
    <reaction evidence="1">
        <text>urea + 2 H2O + H(+) = hydrogencarbonate + 2 NH4(+)</text>
        <dbReference type="Rhea" id="RHEA:20557"/>
        <dbReference type="ChEBI" id="CHEBI:15377"/>
        <dbReference type="ChEBI" id="CHEBI:15378"/>
        <dbReference type="ChEBI" id="CHEBI:16199"/>
        <dbReference type="ChEBI" id="CHEBI:17544"/>
        <dbReference type="ChEBI" id="CHEBI:28938"/>
        <dbReference type="EC" id="3.5.1.5"/>
    </reaction>
</comment>
<comment type="pathway">
    <text evidence="1">Nitrogen metabolism; urea degradation; CO(2) and NH(3) from urea (urease route): step 1/1.</text>
</comment>
<comment type="subunit">
    <text evidence="1">Heterotrimer of UreA (gamma), UreB (beta) and UreC (alpha) subunits. Three heterotrimers associate to form the active enzyme.</text>
</comment>
<comment type="subcellular location">
    <subcellularLocation>
        <location evidence="1">Cytoplasm</location>
    </subcellularLocation>
</comment>
<comment type="similarity">
    <text evidence="1">Belongs to the urease beta subunit family.</text>
</comment>
<sequence length="101" mass="10989">MIPGEYDIQPGDIELNAGRRTLALSVANTGDRPIQVGSHYHFFEVNDALAFDRPATRGMRLNIAAGTAVRFEPGQSREVELVEIGGGRRVYGFAGRVMGDL</sequence>
<keyword id="KW-0963">Cytoplasm</keyword>
<keyword id="KW-0378">Hydrolase</keyword>
<keyword id="KW-1185">Reference proteome</keyword>
<protein>
    <recommendedName>
        <fullName evidence="1">Urease subunit beta</fullName>
        <ecNumber evidence="1">3.5.1.5</ecNumber>
    </recommendedName>
    <alternativeName>
        <fullName evidence="1">Urea amidohydrolase subunit beta</fullName>
    </alternativeName>
</protein>
<proteinExistence type="inferred from homology"/>
<evidence type="ECO:0000255" key="1">
    <source>
        <dbReference type="HAMAP-Rule" id="MF_01954"/>
    </source>
</evidence>
<organism>
    <name type="scientific">Pseudomonas aeruginosa (strain ATCC 15692 / DSM 22644 / CIP 104116 / JCM 14847 / LMG 12228 / 1C / PRS 101 / PAO1)</name>
    <dbReference type="NCBI Taxonomy" id="208964"/>
    <lineage>
        <taxon>Bacteria</taxon>
        <taxon>Pseudomonadati</taxon>
        <taxon>Pseudomonadota</taxon>
        <taxon>Gammaproteobacteria</taxon>
        <taxon>Pseudomonadales</taxon>
        <taxon>Pseudomonadaceae</taxon>
        <taxon>Pseudomonas</taxon>
    </lineage>
</organism>
<accession>Q9HUU6</accession>